<gene>
    <name evidence="1" type="primary">sucC</name>
    <name type="ordered locus">C8J_0494</name>
</gene>
<reference key="1">
    <citation type="journal article" date="2007" name="J. Bacteriol.">
        <title>The complete genome sequence of Campylobacter jejuni strain 81116 (NCTC11828).</title>
        <authorList>
            <person name="Pearson B.M."/>
            <person name="Gaskin D.J.H."/>
            <person name="Segers R.P.A.M."/>
            <person name="Wells J.M."/>
            <person name="Nuijten P.J.M."/>
            <person name="van Vliet A.H.M."/>
        </authorList>
    </citation>
    <scope>NUCLEOTIDE SEQUENCE [LARGE SCALE GENOMIC DNA]</scope>
    <source>
        <strain>81116 / NCTC 11828</strain>
    </source>
</reference>
<organism>
    <name type="scientific">Campylobacter jejuni subsp. jejuni serotype O:6 (strain 81116 / NCTC 11828)</name>
    <dbReference type="NCBI Taxonomy" id="407148"/>
    <lineage>
        <taxon>Bacteria</taxon>
        <taxon>Pseudomonadati</taxon>
        <taxon>Campylobacterota</taxon>
        <taxon>Epsilonproteobacteria</taxon>
        <taxon>Campylobacterales</taxon>
        <taxon>Campylobacteraceae</taxon>
        <taxon>Campylobacter</taxon>
    </lineage>
</organism>
<comment type="function">
    <text evidence="1">Succinyl-CoA synthetase functions in the citric acid cycle (TCA), coupling the hydrolysis of succinyl-CoA to the synthesis of either ATP or GTP and thus represents the only step of substrate-level phosphorylation in the TCA. The beta subunit provides nucleotide specificity of the enzyme and binds the substrate succinate, while the binding sites for coenzyme A and phosphate are found in the alpha subunit.</text>
</comment>
<comment type="catalytic activity">
    <reaction evidence="1">
        <text>succinate + ATP + CoA = succinyl-CoA + ADP + phosphate</text>
        <dbReference type="Rhea" id="RHEA:17661"/>
        <dbReference type="ChEBI" id="CHEBI:30031"/>
        <dbReference type="ChEBI" id="CHEBI:30616"/>
        <dbReference type="ChEBI" id="CHEBI:43474"/>
        <dbReference type="ChEBI" id="CHEBI:57287"/>
        <dbReference type="ChEBI" id="CHEBI:57292"/>
        <dbReference type="ChEBI" id="CHEBI:456216"/>
        <dbReference type="EC" id="6.2.1.5"/>
    </reaction>
    <physiologicalReaction direction="right-to-left" evidence="1">
        <dbReference type="Rhea" id="RHEA:17663"/>
    </physiologicalReaction>
</comment>
<comment type="catalytic activity">
    <reaction evidence="1">
        <text>GTP + succinate + CoA = succinyl-CoA + GDP + phosphate</text>
        <dbReference type="Rhea" id="RHEA:22120"/>
        <dbReference type="ChEBI" id="CHEBI:30031"/>
        <dbReference type="ChEBI" id="CHEBI:37565"/>
        <dbReference type="ChEBI" id="CHEBI:43474"/>
        <dbReference type="ChEBI" id="CHEBI:57287"/>
        <dbReference type="ChEBI" id="CHEBI:57292"/>
        <dbReference type="ChEBI" id="CHEBI:58189"/>
    </reaction>
    <physiologicalReaction direction="right-to-left" evidence="1">
        <dbReference type="Rhea" id="RHEA:22122"/>
    </physiologicalReaction>
</comment>
<comment type="cofactor">
    <cofactor evidence="1">
        <name>Mg(2+)</name>
        <dbReference type="ChEBI" id="CHEBI:18420"/>
    </cofactor>
    <text evidence="1">Binds 1 Mg(2+) ion per subunit.</text>
</comment>
<comment type="pathway">
    <text evidence="1">Carbohydrate metabolism; tricarboxylic acid cycle; succinate from succinyl-CoA (ligase route): step 1/1.</text>
</comment>
<comment type="subunit">
    <text evidence="1">Heterotetramer of two alpha and two beta subunits.</text>
</comment>
<comment type="similarity">
    <text evidence="1">Belongs to the succinate/malate CoA ligase beta subunit family.</text>
</comment>
<name>SUCC_CAMJ8</name>
<proteinExistence type="inferred from homology"/>
<feature type="chain" id="PRO_1000082053" description="Succinate--CoA ligase [ADP-forming] subunit beta">
    <location>
        <begin position="1"/>
        <end position="387"/>
    </location>
</feature>
<feature type="domain" description="ATP-grasp" evidence="1">
    <location>
        <begin position="9"/>
        <end position="244"/>
    </location>
</feature>
<feature type="binding site" evidence="1">
    <location>
        <position position="46"/>
    </location>
    <ligand>
        <name>ATP</name>
        <dbReference type="ChEBI" id="CHEBI:30616"/>
    </ligand>
</feature>
<feature type="binding site" evidence="1">
    <location>
        <begin position="53"/>
        <end position="55"/>
    </location>
    <ligand>
        <name>ATP</name>
        <dbReference type="ChEBI" id="CHEBI:30616"/>
    </ligand>
</feature>
<feature type="binding site" evidence="1">
    <location>
        <position position="99"/>
    </location>
    <ligand>
        <name>ATP</name>
        <dbReference type="ChEBI" id="CHEBI:30616"/>
    </ligand>
</feature>
<feature type="binding site" evidence="1">
    <location>
        <position position="102"/>
    </location>
    <ligand>
        <name>ATP</name>
        <dbReference type="ChEBI" id="CHEBI:30616"/>
    </ligand>
</feature>
<feature type="binding site" evidence="1">
    <location>
        <position position="107"/>
    </location>
    <ligand>
        <name>ATP</name>
        <dbReference type="ChEBI" id="CHEBI:30616"/>
    </ligand>
</feature>
<feature type="binding site" evidence="1">
    <location>
        <position position="199"/>
    </location>
    <ligand>
        <name>Mg(2+)</name>
        <dbReference type="ChEBI" id="CHEBI:18420"/>
    </ligand>
</feature>
<feature type="binding site" evidence="1">
    <location>
        <position position="213"/>
    </location>
    <ligand>
        <name>Mg(2+)</name>
        <dbReference type="ChEBI" id="CHEBI:18420"/>
    </ligand>
</feature>
<feature type="binding site" evidence="1">
    <location>
        <position position="264"/>
    </location>
    <ligand>
        <name>substrate</name>
        <note>ligand shared with subunit alpha</note>
    </ligand>
</feature>
<feature type="binding site" evidence="1">
    <location>
        <begin position="321"/>
        <end position="323"/>
    </location>
    <ligand>
        <name>substrate</name>
        <note>ligand shared with subunit alpha</note>
    </ligand>
</feature>
<keyword id="KW-0067">ATP-binding</keyword>
<keyword id="KW-0436">Ligase</keyword>
<keyword id="KW-0460">Magnesium</keyword>
<keyword id="KW-0479">Metal-binding</keyword>
<keyword id="KW-0547">Nucleotide-binding</keyword>
<keyword id="KW-0816">Tricarboxylic acid cycle</keyword>
<protein>
    <recommendedName>
        <fullName evidence="1">Succinate--CoA ligase [ADP-forming] subunit beta</fullName>
        <ecNumber evidence="1">6.2.1.5</ecNumber>
    </recommendedName>
    <alternativeName>
        <fullName evidence="1">Succinyl-CoA synthetase subunit beta</fullName>
        <shortName evidence="1">SCS-beta</shortName>
    </alternativeName>
</protein>
<dbReference type="EC" id="6.2.1.5" evidence="1"/>
<dbReference type="EMBL" id="CP000814">
    <property type="protein sequence ID" value="ABV52093.1"/>
    <property type="molecule type" value="Genomic_DNA"/>
</dbReference>
<dbReference type="RefSeq" id="WP_002866417.1">
    <property type="nucleotide sequence ID" value="NC_009839.1"/>
</dbReference>
<dbReference type="SMR" id="A8FKV6"/>
<dbReference type="KEGG" id="cju:C8J_0494"/>
<dbReference type="HOGENOM" id="CLU_037430_0_2_7"/>
<dbReference type="UniPathway" id="UPA00223">
    <property type="reaction ID" value="UER00999"/>
</dbReference>
<dbReference type="GO" id="GO:0005829">
    <property type="term" value="C:cytosol"/>
    <property type="evidence" value="ECO:0007669"/>
    <property type="project" value="TreeGrafter"/>
</dbReference>
<dbReference type="GO" id="GO:0042709">
    <property type="term" value="C:succinate-CoA ligase complex"/>
    <property type="evidence" value="ECO:0007669"/>
    <property type="project" value="TreeGrafter"/>
</dbReference>
<dbReference type="GO" id="GO:0005524">
    <property type="term" value="F:ATP binding"/>
    <property type="evidence" value="ECO:0007669"/>
    <property type="project" value="UniProtKB-UniRule"/>
</dbReference>
<dbReference type="GO" id="GO:0000287">
    <property type="term" value="F:magnesium ion binding"/>
    <property type="evidence" value="ECO:0007669"/>
    <property type="project" value="UniProtKB-UniRule"/>
</dbReference>
<dbReference type="GO" id="GO:0004775">
    <property type="term" value="F:succinate-CoA ligase (ADP-forming) activity"/>
    <property type="evidence" value="ECO:0007669"/>
    <property type="project" value="UniProtKB-UniRule"/>
</dbReference>
<dbReference type="GO" id="GO:0004776">
    <property type="term" value="F:succinate-CoA ligase (GDP-forming) activity"/>
    <property type="evidence" value="ECO:0007669"/>
    <property type="project" value="RHEA"/>
</dbReference>
<dbReference type="GO" id="GO:0006104">
    <property type="term" value="P:succinyl-CoA metabolic process"/>
    <property type="evidence" value="ECO:0007669"/>
    <property type="project" value="TreeGrafter"/>
</dbReference>
<dbReference type="GO" id="GO:0006099">
    <property type="term" value="P:tricarboxylic acid cycle"/>
    <property type="evidence" value="ECO:0007669"/>
    <property type="project" value="UniProtKB-UniRule"/>
</dbReference>
<dbReference type="FunFam" id="3.30.1490.20:FF:000002">
    <property type="entry name" value="Succinate--CoA ligase [ADP-forming] subunit beta"/>
    <property type="match status" value="1"/>
</dbReference>
<dbReference type="FunFam" id="3.30.470.20:FF:000002">
    <property type="entry name" value="Succinate--CoA ligase [ADP-forming] subunit beta"/>
    <property type="match status" value="1"/>
</dbReference>
<dbReference type="FunFam" id="3.40.50.261:FF:000001">
    <property type="entry name" value="Succinate--CoA ligase [ADP-forming] subunit beta"/>
    <property type="match status" value="1"/>
</dbReference>
<dbReference type="Gene3D" id="3.30.1490.20">
    <property type="entry name" value="ATP-grasp fold, A domain"/>
    <property type="match status" value="1"/>
</dbReference>
<dbReference type="Gene3D" id="3.30.470.20">
    <property type="entry name" value="ATP-grasp fold, B domain"/>
    <property type="match status" value="1"/>
</dbReference>
<dbReference type="Gene3D" id="3.40.50.261">
    <property type="entry name" value="Succinyl-CoA synthetase domains"/>
    <property type="match status" value="1"/>
</dbReference>
<dbReference type="HAMAP" id="MF_00558">
    <property type="entry name" value="Succ_CoA_beta"/>
    <property type="match status" value="1"/>
</dbReference>
<dbReference type="InterPro" id="IPR013650">
    <property type="entry name" value="ATP-grasp_succ-CoA_synth-type"/>
</dbReference>
<dbReference type="InterPro" id="IPR013815">
    <property type="entry name" value="ATP_grasp_subdomain_1"/>
</dbReference>
<dbReference type="InterPro" id="IPR017866">
    <property type="entry name" value="Succ-CoA_synthase_bsu_CS"/>
</dbReference>
<dbReference type="InterPro" id="IPR005811">
    <property type="entry name" value="SUCC_ACL_C"/>
</dbReference>
<dbReference type="InterPro" id="IPR005809">
    <property type="entry name" value="Succ_CoA_ligase-like_bsu"/>
</dbReference>
<dbReference type="InterPro" id="IPR016102">
    <property type="entry name" value="Succinyl-CoA_synth-like"/>
</dbReference>
<dbReference type="NCBIfam" id="NF001913">
    <property type="entry name" value="PRK00696.1"/>
    <property type="match status" value="1"/>
</dbReference>
<dbReference type="NCBIfam" id="TIGR01016">
    <property type="entry name" value="sucCoAbeta"/>
    <property type="match status" value="1"/>
</dbReference>
<dbReference type="PANTHER" id="PTHR11815:SF10">
    <property type="entry name" value="SUCCINATE--COA LIGASE [GDP-FORMING] SUBUNIT BETA, MITOCHONDRIAL"/>
    <property type="match status" value="1"/>
</dbReference>
<dbReference type="PANTHER" id="PTHR11815">
    <property type="entry name" value="SUCCINYL-COA SYNTHETASE BETA CHAIN"/>
    <property type="match status" value="1"/>
</dbReference>
<dbReference type="Pfam" id="PF08442">
    <property type="entry name" value="ATP-grasp_2"/>
    <property type="match status" value="1"/>
</dbReference>
<dbReference type="Pfam" id="PF00549">
    <property type="entry name" value="Ligase_CoA"/>
    <property type="match status" value="1"/>
</dbReference>
<dbReference type="PIRSF" id="PIRSF001554">
    <property type="entry name" value="SucCS_beta"/>
    <property type="match status" value="1"/>
</dbReference>
<dbReference type="SUPFAM" id="SSF56059">
    <property type="entry name" value="Glutathione synthetase ATP-binding domain-like"/>
    <property type="match status" value="1"/>
</dbReference>
<dbReference type="SUPFAM" id="SSF52210">
    <property type="entry name" value="Succinyl-CoA synthetase domains"/>
    <property type="match status" value="1"/>
</dbReference>
<dbReference type="PROSITE" id="PS01217">
    <property type="entry name" value="SUCCINYL_COA_LIG_3"/>
    <property type="match status" value="1"/>
</dbReference>
<evidence type="ECO:0000255" key="1">
    <source>
        <dbReference type="HAMAP-Rule" id="MF_00558"/>
    </source>
</evidence>
<accession>A8FKV6</accession>
<sequence length="387" mass="41724">MNIHEYQAKAIFADNGIPTLKGKVAFSVDEAVSNAKELGGSVWAVKAQIHAGGRGLGGGVKIAKNLDEVKDYASKILGMNLATHQTGPEGKLVQKLYIESGANIVKEYYLAILFNRMAEQITIIASSEGGMDIEKVAKESPEKIAKVGIDPQIGFKMFHGLEVARVLGLDKDEGKKLISMIAKLYKLYMDKDMNMLEINPLIKTAEGDFYALDAKCSFDDSALYRHPEIAELRDITEENPAEREAAEFGLSYVKLDGDVACMVNGAGLAMATMDIINYSGAKPANFLDVGGGASPETVAKAFEIILRDKNVKVIFINIFGGIVRCDRIANGILEATKNVEVNIPIVVRLDGTNAAEAKTILDNSNLKNIKAATNLKNGAELVKSLVG</sequence>